<accession>P52226</accession>
<evidence type="ECO:0000250" key="1"/>
<evidence type="ECO:0000255" key="2"/>
<evidence type="ECO:0000256" key="3">
    <source>
        <dbReference type="SAM" id="MobiDB-lite"/>
    </source>
</evidence>
<evidence type="ECO:0000305" key="4"/>
<dbReference type="EMBL" id="U44827">
    <property type="protein sequence ID" value="AAC44228.1"/>
    <property type="molecule type" value="Genomic_DNA"/>
</dbReference>
<dbReference type="SMR" id="P52226"/>
<dbReference type="eggNOG" id="COG3088">
    <property type="taxonomic scope" value="Bacteria"/>
</dbReference>
<dbReference type="GO" id="GO:0005886">
    <property type="term" value="C:plasma membrane"/>
    <property type="evidence" value="ECO:0007669"/>
    <property type="project" value="TreeGrafter"/>
</dbReference>
<dbReference type="GO" id="GO:0046872">
    <property type="term" value="F:metal ion binding"/>
    <property type="evidence" value="ECO:0007669"/>
    <property type="project" value="UniProtKB-KW"/>
</dbReference>
<dbReference type="GO" id="GO:0017004">
    <property type="term" value="P:cytochrome complex assembly"/>
    <property type="evidence" value="ECO:0007669"/>
    <property type="project" value="UniProtKB-KW"/>
</dbReference>
<dbReference type="CDD" id="cd16378">
    <property type="entry name" value="CcmH_N"/>
    <property type="match status" value="1"/>
</dbReference>
<dbReference type="FunFam" id="1.10.8.640:FF:000001">
    <property type="entry name" value="Cytochrome c-type biogenesis protein"/>
    <property type="match status" value="1"/>
</dbReference>
<dbReference type="Gene3D" id="1.10.8.640">
    <property type="entry name" value="Cytochrome C biogenesis protein"/>
    <property type="match status" value="1"/>
</dbReference>
<dbReference type="InterPro" id="IPR051263">
    <property type="entry name" value="C-type_cytochrome_biogenesis"/>
</dbReference>
<dbReference type="InterPro" id="IPR005616">
    <property type="entry name" value="CcmH/CycL/Ccl2/NrfF_N"/>
</dbReference>
<dbReference type="InterPro" id="IPR038297">
    <property type="entry name" value="CcmH/CycL/NrfF/Ccl2_sf"/>
</dbReference>
<dbReference type="PANTHER" id="PTHR47870">
    <property type="entry name" value="CYTOCHROME C-TYPE BIOGENESIS PROTEIN CCMH"/>
    <property type="match status" value="1"/>
</dbReference>
<dbReference type="PANTHER" id="PTHR47870:SF1">
    <property type="entry name" value="CYTOCHROME C-TYPE BIOGENESIS PROTEIN CCMH"/>
    <property type="match status" value="1"/>
</dbReference>
<dbReference type="Pfam" id="PF03918">
    <property type="entry name" value="CcmH"/>
    <property type="match status" value="1"/>
</dbReference>
<sequence length="156" mass="17470">MKRLLAAAVCLGPGRCGHAAIDTYEFANDAERERFRDLTKELRCPKCQNQDIADSNAPIATDLRREIFRMLGEGKDDQQIIDFMVDRYGDFVRYKPALTGKTALLWFGPAGLLLAGVVVMAVIVRRRRAAPTDGSDALSPEERKRLDQLLDTKTDD</sequence>
<proteinExistence type="inferred from homology"/>
<keyword id="KW-0201">Cytochrome c-type biogenesis</keyword>
<keyword id="KW-0349">Heme</keyword>
<keyword id="KW-0408">Iron</keyword>
<keyword id="KW-0472">Membrane</keyword>
<keyword id="KW-0479">Metal-binding</keyword>
<keyword id="KW-0732">Signal</keyword>
<keyword id="KW-0812">Transmembrane</keyword>
<keyword id="KW-1133">Transmembrane helix</keyword>
<protein>
    <recommendedName>
        <fullName>Cytochrome c-type biogenesis protein CcmH</fullName>
    </recommendedName>
    <alternativeName>
        <fullName>Cytochrome c-type biogenesis protein CycL</fullName>
    </alternativeName>
</protein>
<name>CCMH_PSEFL</name>
<feature type="signal peptide" evidence="2">
    <location>
        <begin position="1"/>
        <end position="19"/>
    </location>
</feature>
<feature type="chain" id="PRO_0000006609" description="Cytochrome c-type biogenesis protein CcmH">
    <location>
        <begin position="20"/>
        <end position="156"/>
    </location>
</feature>
<feature type="transmembrane region" description="Helical" evidence="2">
    <location>
        <begin position="104"/>
        <end position="124"/>
    </location>
</feature>
<feature type="region of interest" description="Disordered" evidence="3">
    <location>
        <begin position="131"/>
        <end position="156"/>
    </location>
</feature>
<feature type="compositionally biased region" description="Basic and acidic residues" evidence="3">
    <location>
        <begin position="140"/>
        <end position="156"/>
    </location>
</feature>
<feature type="binding site" description="covalent" evidence="2">
    <location>
        <position position="44"/>
    </location>
    <ligand>
        <name>heme</name>
        <dbReference type="ChEBI" id="CHEBI:30413"/>
    </ligand>
</feature>
<feature type="binding site" description="covalent" evidence="2">
    <location>
        <position position="47"/>
    </location>
    <ligand>
        <name>heme</name>
        <dbReference type="ChEBI" id="CHEBI:30413"/>
    </ligand>
</feature>
<reference key="1">
    <citation type="submission" date="1996-01" db="EMBL/GenBank/DDBJ databases">
        <authorList>
            <person name="Yang C.H."/>
            <person name="Azad H.R."/>
            <person name="Cooksey D.A."/>
        </authorList>
    </citation>
    <scope>NUCLEOTIDE SEQUENCE [GENOMIC DNA]</scope>
    <source>
        <strain>09906</strain>
    </source>
</reference>
<gene>
    <name type="primary">ccmH</name>
    <name type="synonym">cycL</name>
</gene>
<comment type="function">
    <text evidence="1">Required for the biogenesis of c-type cytochromes. Possible subunit of a heme lyase (By similarity).</text>
</comment>
<comment type="subcellular location">
    <subcellularLocation>
        <location evidence="4">Membrane</location>
        <topology evidence="4">Single-pass membrane protein</topology>
        <orientation evidence="4">Periplasmic side</orientation>
    </subcellularLocation>
</comment>
<comment type="similarity">
    <text evidence="4">Belongs to the CcmH/CycL/Ccl2/NrfF family.</text>
</comment>
<organism>
    <name type="scientific">Pseudomonas fluorescens</name>
    <dbReference type="NCBI Taxonomy" id="294"/>
    <lineage>
        <taxon>Bacteria</taxon>
        <taxon>Pseudomonadati</taxon>
        <taxon>Pseudomonadota</taxon>
        <taxon>Gammaproteobacteria</taxon>
        <taxon>Pseudomonadales</taxon>
        <taxon>Pseudomonadaceae</taxon>
        <taxon>Pseudomonas</taxon>
    </lineage>
</organism>